<comment type="subunit">
    <text evidence="5">Homodimer.</text>
</comment>
<comment type="subcellular location">
    <subcellularLocation>
        <location evidence="1">Nucleus</location>
    </subcellularLocation>
</comment>
<comment type="alternative products">
    <event type="alternative splicing"/>
    <isoform>
        <id>Q8W2F2-1</id>
        <name>1</name>
        <sequence type="displayed"/>
    </isoform>
    <isoform>
        <id>Q8W2F2-2</id>
        <name>2</name>
        <sequence type="described" ref="VSP_036074 VSP_036075"/>
    </isoform>
</comment>
<comment type="tissue specificity">
    <text evidence="3">Expressed consitutively in roots, leaves, stems, and flowers.</text>
</comment>
<comment type="miscellaneous">
    <molecule>Isoform 2</molecule>
    <text evidence="5">May be due to intron retention.</text>
</comment>
<comment type="sequence caution" evidence="5">
    <conflict type="erroneous gene model prediction">
        <sequence resource="EMBL-CDS" id="CAA18500"/>
    </conflict>
</comment>
<comment type="sequence caution" evidence="5">
    <conflict type="erroneous gene model prediction">
        <sequence resource="EMBL-CDS" id="CAB81515"/>
    </conflict>
</comment>
<accession>Q8W2F2</accession>
<accession>O65643</accession>
<accession>Q8RX65</accession>
<keyword id="KW-0025">Alternative splicing</keyword>
<keyword id="KW-0238">DNA-binding</keyword>
<keyword id="KW-0539">Nucleus</keyword>
<keyword id="KW-1185">Reference proteome</keyword>
<keyword id="KW-0804">Transcription</keyword>
<keyword id="KW-0805">Transcription regulation</keyword>
<proteinExistence type="evidence at transcript level"/>
<protein>
    <recommendedName>
        <fullName>Transcription factor bHLH11</fullName>
    </recommendedName>
    <alternativeName>
        <fullName>Basic helix-loop-helix protein 11</fullName>
        <shortName>AtbHLH11</shortName>
        <shortName>bHLH 11</shortName>
    </alternativeName>
    <alternativeName>
        <fullName>Transcription factor EN 137</fullName>
    </alternativeName>
    <alternativeName>
        <fullName>bHLH transcription factor bHLH011</fullName>
    </alternativeName>
</protein>
<reference key="1">
    <citation type="journal article" date="2003" name="Mol. Biol. Evol.">
        <title>The basic helix-loop-helix transcription factor family in plants: a genome-wide study of protein structure and functional diversity.</title>
        <authorList>
            <person name="Heim M.A."/>
            <person name="Jakoby M."/>
            <person name="Werber M."/>
            <person name="Martin C."/>
            <person name="Weisshaar B."/>
            <person name="Bailey P.C."/>
        </authorList>
    </citation>
    <scope>NUCLEOTIDE SEQUENCE [MRNA] (ISOFORM 1)</scope>
    <scope>TISSUE SPECIFICITY</scope>
    <scope>GENE FAMILY</scope>
    <scope>NOMENCLATURE</scope>
    <source>
        <strain>cv. Columbia</strain>
    </source>
</reference>
<reference key="2">
    <citation type="journal article" date="1999" name="Nature">
        <title>Sequence and analysis of chromosome 4 of the plant Arabidopsis thaliana.</title>
        <authorList>
            <person name="Mayer K.F.X."/>
            <person name="Schueller C."/>
            <person name="Wambutt R."/>
            <person name="Murphy G."/>
            <person name="Volckaert G."/>
            <person name="Pohl T."/>
            <person name="Duesterhoeft A."/>
            <person name="Stiekema W."/>
            <person name="Entian K.-D."/>
            <person name="Terryn N."/>
            <person name="Harris B."/>
            <person name="Ansorge W."/>
            <person name="Brandt P."/>
            <person name="Grivell L.A."/>
            <person name="Rieger M."/>
            <person name="Weichselgartner M."/>
            <person name="de Simone V."/>
            <person name="Obermaier B."/>
            <person name="Mache R."/>
            <person name="Mueller M."/>
            <person name="Kreis M."/>
            <person name="Delseny M."/>
            <person name="Puigdomenech P."/>
            <person name="Watson M."/>
            <person name="Schmidtheini T."/>
            <person name="Reichert B."/>
            <person name="Portetelle D."/>
            <person name="Perez-Alonso M."/>
            <person name="Boutry M."/>
            <person name="Bancroft I."/>
            <person name="Vos P."/>
            <person name="Hoheisel J."/>
            <person name="Zimmermann W."/>
            <person name="Wedler H."/>
            <person name="Ridley P."/>
            <person name="Langham S.-A."/>
            <person name="McCullagh B."/>
            <person name="Bilham L."/>
            <person name="Robben J."/>
            <person name="van der Schueren J."/>
            <person name="Grymonprez B."/>
            <person name="Chuang Y.-J."/>
            <person name="Vandenbussche F."/>
            <person name="Braeken M."/>
            <person name="Weltjens I."/>
            <person name="Voet M."/>
            <person name="Bastiaens I."/>
            <person name="Aert R."/>
            <person name="Defoor E."/>
            <person name="Weitzenegger T."/>
            <person name="Bothe G."/>
            <person name="Ramsperger U."/>
            <person name="Hilbert H."/>
            <person name="Braun M."/>
            <person name="Holzer E."/>
            <person name="Brandt A."/>
            <person name="Peters S."/>
            <person name="van Staveren M."/>
            <person name="Dirkse W."/>
            <person name="Mooijman P."/>
            <person name="Klein Lankhorst R."/>
            <person name="Rose M."/>
            <person name="Hauf J."/>
            <person name="Koetter P."/>
            <person name="Berneiser S."/>
            <person name="Hempel S."/>
            <person name="Feldpausch M."/>
            <person name="Lamberth S."/>
            <person name="Van den Daele H."/>
            <person name="De Keyser A."/>
            <person name="Buysshaert C."/>
            <person name="Gielen J."/>
            <person name="Villarroel R."/>
            <person name="De Clercq R."/>
            <person name="van Montagu M."/>
            <person name="Rogers J."/>
            <person name="Cronin A."/>
            <person name="Quail M.A."/>
            <person name="Bray-Allen S."/>
            <person name="Clark L."/>
            <person name="Doggett J."/>
            <person name="Hall S."/>
            <person name="Kay M."/>
            <person name="Lennard N."/>
            <person name="McLay K."/>
            <person name="Mayes R."/>
            <person name="Pettett A."/>
            <person name="Rajandream M.A."/>
            <person name="Lyne M."/>
            <person name="Benes V."/>
            <person name="Rechmann S."/>
            <person name="Borkova D."/>
            <person name="Bloecker H."/>
            <person name="Scharfe M."/>
            <person name="Grimm M."/>
            <person name="Loehnert T.-H."/>
            <person name="Dose S."/>
            <person name="de Haan M."/>
            <person name="Maarse A.C."/>
            <person name="Schaefer M."/>
            <person name="Mueller-Auer S."/>
            <person name="Gabel C."/>
            <person name="Fuchs M."/>
            <person name="Fartmann B."/>
            <person name="Granderath K."/>
            <person name="Dauner D."/>
            <person name="Herzl A."/>
            <person name="Neumann S."/>
            <person name="Argiriou A."/>
            <person name="Vitale D."/>
            <person name="Liguori R."/>
            <person name="Piravandi E."/>
            <person name="Massenet O."/>
            <person name="Quigley F."/>
            <person name="Clabauld G."/>
            <person name="Muendlein A."/>
            <person name="Felber R."/>
            <person name="Schnabl S."/>
            <person name="Hiller R."/>
            <person name="Schmidt W."/>
            <person name="Lecharny A."/>
            <person name="Aubourg S."/>
            <person name="Chefdor F."/>
            <person name="Cooke R."/>
            <person name="Berger C."/>
            <person name="Monfort A."/>
            <person name="Casacuberta E."/>
            <person name="Gibbons T."/>
            <person name="Weber N."/>
            <person name="Vandenbol M."/>
            <person name="Bargues M."/>
            <person name="Terol J."/>
            <person name="Torres A."/>
            <person name="Perez-Perez A."/>
            <person name="Purnelle B."/>
            <person name="Bent E."/>
            <person name="Johnson S."/>
            <person name="Tacon D."/>
            <person name="Jesse T."/>
            <person name="Heijnen L."/>
            <person name="Schwarz S."/>
            <person name="Scholler P."/>
            <person name="Heber S."/>
            <person name="Francs P."/>
            <person name="Bielke C."/>
            <person name="Frishman D."/>
            <person name="Haase D."/>
            <person name="Lemcke K."/>
            <person name="Mewes H.-W."/>
            <person name="Stocker S."/>
            <person name="Zaccaria P."/>
            <person name="Bevan M."/>
            <person name="Wilson R.K."/>
            <person name="de la Bastide M."/>
            <person name="Habermann K."/>
            <person name="Parnell L."/>
            <person name="Dedhia N."/>
            <person name="Gnoj L."/>
            <person name="Schutz K."/>
            <person name="Huang E."/>
            <person name="Spiegel L."/>
            <person name="Sekhon M."/>
            <person name="Murray J."/>
            <person name="Sheet P."/>
            <person name="Cordes M."/>
            <person name="Abu-Threideh J."/>
            <person name="Stoneking T."/>
            <person name="Kalicki J."/>
            <person name="Graves T."/>
            <person name="Harmon G."/>
            <person name="Edwards J."/>
            <person name="Latreille P."/>
            <person name="Courtney L."/>
            <person name="Cloud J."/>
            <person name="Abbott A."/>
            <person name="Scott K."/>
            <person name="Johnson D."/>
            <person name="Minx P."/>
            <person name="Bentley D."/>
            <person name="Fulton B."/>
            <person name="Miller N."/>
            <person name="Greco T."/>
            <person name="Kemp K."/>
            <person name="Kramer J."/>
            <person name="Fulton L."/>
            <person name="Mardis E."/>
            <person name="Dante M."/>
            <person name="Pepin K."/>
            <person name="Hillier L.W."/>
            <person name="Nelson J."/>
            <person name="Spieth J."/>
            <person name="Ryan E."/>
            <person name="Andrews S."/>
            <person name="Geisel C."/>
            <person name="Layman D."/>
            <person name="Du H."/>
            <person name="Ali J."/>
            <person name="Berghoff A."/>
            <person name="Jones K."/>
            <person name="Drone K."/>
            <person name="Cotton M."/>
            <person name="Joshu C."/>
            <person name="Antonoiu B."/>
            <person name="Zidanic M."/>
            <person name="Strong C."/>
            <person name="Sun H."/>
            <person name="Lamar B."/>
            <person name="Yordan C."/>
            <person name="Ma P."/>
            <person name="Zhong J."/>
            <person name="Preston R."/>
            <person name="Vil D."/>
            <person name="Shekher M."/>
            <person name="Matero A."/>
            <person name="Shah R."/>
            <person name="Swaby I.K."/>
            <person name="O'Shaughnessy A."/>
            <person name="Rodriguez M."/>
            <person name="Hoffman J."/>
            <person name="Till S."/>
            <person name="Granat S."/>
            <person name="Shohdy N."/>
            <person name="Hasegawa A."/>
            <person name="Hameed A."/>
            <person name="Lodhi M."/>
            <person name="Johnson A."/>
            <person name="Chen E."/>
            <person name="Marra M.A."/>
            <person name="Martienssen R."/>
            <person name="McCombie W.R."/>
        </authorList>
    </citation>
    <scope>NUCLEOTIDE SEQUENCE [LARGE SCALE GENOMIC DNA]</scope>
    <source>
        <strain>cv. Columbia</strain>
    </source>
</reference>
<reference key="3">
    <citation type="journal article" date="2017" name="Plant J.">
        <title>Araport11: a complete reannotation of the Arabidopsis thaliana reference genome.</title>
        <authorList>
            <person name="Cheng C.Y."/>
            <person name="Krishnakumar V."/>
            <person name="Chan A.P."/>
            <person name="Thibaud-Nissen F."/>
            <person name="Schobel S."/>
            <person name="Town C.D."/>
        </authorList>
    </citation>
    <scope>GENOME REANNOTATION</scope>
    <source>
        <strain>cv. Columbia</strain>
    </source>
</reference>
<reference key="4">
    <citation type="journal article" date="2003" name="Science">
        <title>Empirical analysis of transcriptional activity in the Arabidopsis genome.</title>
        <authorList>
            <person name="Yamada K."/>
            <person name="Lim J."/>
            <person name="Dale J.M."/>
            <person name="Chen H."/>
            <person name="Shinn P."/>
            <person name="Palm C.J."/>
            <person name="Southwick A.M."/>
            <person name="Wu H.C."/>
            <person name="Kim C.J."/>
            <person name="Nguyen M."/>
            <person name="Pham P.K."/>
            <person name="Cheuk R.F."/>
            <person name="Karlin-Newmann G."/>
            <person name="Liu S.X."/>
            <person name="Lam B."/>
            <person name="Sakano H."/>
            <person name="Wu T."/>
            <person name="Yu G."/>
            <person name="Miranda M."/>
            <person name="Quach H.L."/>
            <person name="Tripp M."/>
            <person name="Chang C.H."/>
            <person name="Lee J.M."/>
            <person name="Toriumi M.J."/>
            <person name="Chan M.M."/>
            <person name="Tang C.C."/>
            <person name="Onodera C.S."/>
            <person name="Deng J.M."/>
            <person name="Akiyama K."/>
            <person name="Ansari Y."/>
            <person name="Arakawa T."/>
            <person name="Banh J."/>
            <person name="Banno F."/>
            <person name="Bowser L."/>
            <person name="Brooks S.Y."/>
            <person name="Carninci P."/>
            <person name="Chao Q."/>
            <person name="Choy N."/>
            <person name="Enju A."/>
            <person name="Goldsmith A.D."/>
            <person name="Gurjal M."/>
            <person name="Hansen N.F."/>
            <person name="Hayashizaki Y."/>
            <person name="Johnson-Hopson C."/>
            <person name="Hsuan V.W."/>
            <person name="Iida K."/>
            <person name="Karnes M."/>
            <person name="Khan S."/>
            <person name="Koesema E."/>
            <person name="Ishida J."/>
            <person name="Jiang P.X."/>
            <person name="Jones T."/>
            <person name="Kawai J."/>
            <person name="Kamiya A."/>
            <person name="Meyers C."/>
            <person name="Nakajima M."/>
            <person name="Narusaka M."/>
            <person name="Seki M."/>
            <person name="Sakurai T."/>
            <person name="Satou M."/>
            <person name="Tamse R."/>
            <person name="Vaysberg M."/>
            <person name="Wallender E.K."/>
            <person name="Wong C."/>
            <person name="Yamamura Y."/>
            <person name="Yuan S."/>
            <person name="Shinozaki K."/>
            <person name="Davis R.W."/>
            <person name="Theologis A."/>
            <person name="Ecker J.R."/>
        </authorList>
    </citation>
    <scope>NUCLEOTIDE SEQUENCE [LARGE SCALE MRNA] (ISOFORM 2)</scope>
    <source>
        <strain>cv. Columbia</strain>
    </source>
</reference>
<reference key="5">
    <citation type="journal article" date="2003" name="Plant Cell">
        <title>The Arabidopsis basic/helix-loop-helix transcription factor family.</title>
        <authorList>
            <person name="Toledo-Ortiz G."/>
            <person name="Huq E."/>
            <person name="Quail P.H."/>
        </authorList>
    </citation>
    <scope>GENE FAMILY</scope>
</reference>
<reference key="6">
    <citation type="journal article" date="2003" name="Plant Cell">
        <title>Update on the basic helix-loop-helix transcription factor gene family in Arabidopsis thaliana.</title>
        <authorList>
            <person name="Bailey P.C."/>
            <person name="Martin C."/>
            <person name="Toledo-Ortiz G."/>
            <person name="Quail P.H."/>
            <person name="Huq E."/>
            <person name="Heim M.A."/>
            <person name="Jakoby M."/>
            <person name="Werber M."/>
            <person name="Weisshaar B."/>
        </authorList>
    </citation>
    <scope>GENE FAMILY</scope>
    <scope>NOMENCLATURE</scope>
</reference>
<gene>
    <name type="primary">BHLH11</name>
    <name type="synonym">EN137</name>
    <name type="ordered locus">At4g36060</name>
    <name type="ORF">T19K4.190</name>
</gene>
<sequence>MDQPMKPKTCSESDFADDSSASSSSSSGQNLRGAEMVVEVKKEAVCSQKAEREKLRRDKLKEQFLELGNALDPNRPKSDKASVLTDTIQMLKDVMNQVDRLKAEYETLSQESRELIQEKSELREEKATLKSDIEILNAQYQHRIKTMVPWVPHYSYHIPFVAITQGQSSFIPYSASVNPLTEQQASVQQHSSSSADASMKQDSKIKPLDLDLMMNSNHSGQGNDQKDDVRLKLELKIHASSLAQQDVSGKEKKVSLTTTASSSNSYSLSQAVQDSSPGTVNDMLKP</sequence>
<feature type="chain" id="PRO_0000358728" description="Transcription factor bHLH11">
    <location>
        <begin position="1"/>
        <end position="286"/>
    </location>
</feature>
<feature type="domain" description="bHLH" evidence="1">
    <location>
        <begin position="44"/>
        <end position="94"/>
    </location>
</feature>
<feature type="region of interest" description="Disordered" evidence="2">
    <location>
        <begin position="1"/>
        <end position="34"/>
    </location>
</feature>
<feature type="region of interest" description="Disordered" evidence="2">
    <location>
        <begin position="182"/>
        <end position="202"/>
    </location>
</feature>
<feature type="region of interest" description="Disordered" evidence="2">
    <location>
        <begin position="244"/>
        <end position="286"/>
    </location>
</feature>
<feature type="compositionally biased region" description="Low complexity" evidence="2">
    <location>
        <begin position="18"/>
        <end position="27"/>
    </location>
</feature>
<feature type="compositionally biased region" description="Low complexity" evidence="2">
    <location>
        <begin position="183"/>
        <end position="198"/>
    </location>
</feature>
<feature type="compositionally biased region" description="Low complexity" evidence="2">
    <location>
        <begin position="255"/>
        <end position="269"/>
    </location>
</feature>
<feature type="compositionally biased region" description="Polar residues" evidence="2">
    <location>
        <begin position="270"/>
        <end position="279"/>
    </location>
</feature>
<feature type="splice variant" id="VSP_036074" description="In isoform 2." evidence="4">
    <location>
        <begin position="1"/>
        <end position="18"/>
    </location>
</feature>
<feature type="splice variant" id="VSP_036075" description="In isoform 2." evidence="4">
    <original>SSASSSSSSGQNL</original>
    <variation>MAVSCLFIVSSNY</variation>
    <location>
        <begin position="19"/>
        <end position="31"/>
    </location>
</feature>
<feature type="sequence conflict" description="In Ref. 4; AAN18104/AAL91266." evidence="5" ref="4">
    <original>R</original>
    <variation>G</variation>
    <location>
        <position position="143"/>
    </location>
</feature>
<organism>
    <name type="scientific">Arabidopsis thaliana</name>
    <name type="common">Mouse-ear cress</name>
    <dbReference type="NCBI Taxonomy" id="3702"/>
    <lineage>
        <taxon>Eukaryota</taxon>
        <taxon>Viridiplantae</taxon>
        <taxon>Streptophyta</taxon>
        <taxon>Embryophyta</taxon>
        <taxon>Tracheophyta</taxon>
        <taxon>Spermatophyta</taxon>
        <taxon>Magnoliopsida</taxon>
        <taxon>eudicotyledons</taxon>
        <taxon>Gunneridae</taxon>
        <taxon>Pentapetalae</taxon>
        <taxon>rosids</taxon>
        <taxon>malvids</taxon>
        <taxon>Brassicales</taxon>
        <taxon>Brassicaceae</taxon>
        <taxon>Camelineae</taxon>
        <taxon>Arabidopsis</taxon>
    </lineage>
</organism>
<dbReference type="EMBL" id="AF251696">
    <property type="protein sequence ID" value="AAL55718.2"/>
    <property type="molecule type" value="mRNA"/>
</dbReference>
<dbReference type="EMBL" id="AL022373">
    <property type="protein sequence ID" value="CAA18500.1"/>
    <property type="status" value="ALT_SEQ"/>
    <property type="molecule type" value="Genomic_DNA"/>
</dbReference>
<dbReference type="EMBL" id="AL161588">
    <property type="protein sequence ID" value="CAB81515.1"/>
    <property type="status" value="ALT_SEQ"/>
    <property type="molecule type" value="Genomic_DNA"/>
</dbReference>
<dbReference type="EMBL" id="CP002687">
    <property type="protein sequence ID" value="AEE86608.1"/>
    <property type="molecule type" value="Genomic_DNA"/>
</dbReference>
<dbReference type="EMBL" id="CP002687">
    <property type="protein sequence ID" value="AEE86609.1"/>
    <property type="molecule type" value="Genomic_DNA"/>
</dbReference>
<dbReference type="EMBL" id="AY090362">
    <property type="protein sequence ID" value="AAL91266.1"/>
    <property type="molecule type" value="mRNA"/>
</dbReference>
<dbReference type="EMBL" id="BT000535">
    <property type="protein sequence ID" value="AAN18104.1"/>
    <property type="molecule type" value="mRNA"/>
</dbReference>
<dbReference type="PIR" id="T05498">
    <property type="entry name" value="T05498"/>
</dbReference>
<dbReference type="RefSeq" id="NP_195330.2">
    <molecule id="Q8W2F2-2"/>
    <property type="nucleotide sequence ID" value="NM_119773.3"/>
</dbReference>
<dbReference type="RefSeq" id="NP_849566.1">
    <molecule id="Q8W2F2-1"/>
    <property type="nucleotide sequence ID" value="NM_179235.3"/>
</dbReference>
<dbReference type="SMR" id="Q8W2F2"/>
<dbReference type="BioGRID" id="15044">
    <property type="interactions" value="4"/>
</dbReference>
<dbReference type="FunCoup" id="Q8W2F2">
    <property type="interactions" value="19"/>
</dbReference>
<dbReference type="IntAct" id="Q8W2F2">
    <property type="interactions" value="3"/>
</dbReference>
<dbReference type="STRING" id="3702.Q8W2F2"/>
<dbReference type="PaxDb" id="3702-AT4G36060.1"/>
<dbReference type="ProteomicsDB" id="241220">
    <molecule id="Q8W2F2-1"/>
</dbReference>
<dbReference type="EnsemblPlants" id="AT4G36060.1">
    <molecule id="Q8W2F2-1"/>
    <property type="protein sequence ID" value="AT4G36060.1"/>
    <property type="gene ID" value="AT4G36060"/>
</dbReference>
<dbReference type="EnsemblPlants" id="AT4G36060.2">
    <molecule id="Q8W2F2-2"/>
    <property type="protein sequence ID" value="AT4G36060.2"/>
    <property type="gene ID" value="AT4G36060"/>
</dbReference>
<dbReference type="GeneID" id="829762"/>
<dbReference type="Gramene" id="AT4G36060.1">
    <molecule id="Q8W2F2-1"/>
    <property type="protein sequence ID" value="AT4G36060.1"/>
    <property type="gene ID" value="AT4G36060"/>
</dbReference>
<dbReference type="Gramene" id="AT4G36060.2">
    <molecule id="Q8W2F2-2"/>
    <property type="protein sequence ID" value="AT4G36060.2"/>
    <property type="gene ID" value="AT4G36060"/>
</dbReference>
<dbReference type="KEGG" id="ath:AT4G36060"/>
<dbReference type="Araport" id="AT4G36060"/>
<dbReference type="TAIR" id="AT4G36060">
    <property type="gene designation" value="BHLH11"/>
</dbReference>
<dbReference type="eggNOG" id="ENOG502QRHF">
    <property type="taxonomic scope" value="Eukaryota"/>
</dbReference>
<dbReference type="InParanoid" id="Q8W2F2"/>
<dbReference type="OMA" id="QHRVRTM"/>
<dbReference type="PhylomeDB" id="Q8W2F2"/>
<dbReference type="PRO" id="PR:Q8W2F2"/>
<dbReference type="Proteomes" id="UP000006548">
    <property type="component" value="Chromosome 4"/>
</dbReference>
<dbReference type="ExpressionAtlas" id="Q8W2F2">
    <property type="expression patterns" value="baseline and differential"/>
</dbReference>
<dbReference type="GO" id="GO:0005737">
    <property type="term" value="C:cytoplasm"/>
    <property type="evidence" value="ECO:0000314"/>
    <property type="project" value="TAIR"/>
</dbReference>
<dbReference type="GO" id="GO:0005634">
    <property type="term" value="C:nucleus"/>
    <property type="evidence" value="ECO:0000314"/>
    <property type="project" value="TAIR"/>
</dbReference>
<dbReference type="GO" id="GO:0003677">
    <property type="term" value="F:DNA binding"/>
    <property type="evidence" value="ECO:0007669"/>
    <property type="project" value="UniProtKB-KW"/>
</dbReference>
<dbReference type="GO" id="GO:0003700">
    <property type="term" value="F:DNA-binding transcription factor activity"/>
    <property type="evidence" value="ECO:0000250"/>
    <property type="project" value="TAIR"/>
</dbReference>
<dbReference type="GO" id="GO:0046983">
    <property type="term" value="F:protein dimerization activity"/>
    <property type="evidence" value="ECO:0007669"/>
    <property type="project" value="InterPro"/>
</dbReference>
<dbReference type="GO" id="GO:0006879">
    <property type="term" value="P:intracellular iron ion homeostasis"/>
    <property type="evidence" value="ECO:0007669"/>
    <property type="project" value="InterPro"/>
</dbReference>
<dbReference type="CDD" id="cd11446">
    <property type="entry name" value="bHLH_AtILR3_like"/>
    <property type="match status" value="1"/>
</dbReference>
<dbReference type="Gene3D" id="4.10.280.10">
    <property type="entry name" value="Helix-loop-helix DNA-binding domain"/>
    <property type="match status" value="1"/>
</dbReference>
<dbReference type="InterPro" id="IPR044579">
    <property type="entry name" value="bHLH11/121"/>
</dbReference>
<dbReference type="InterPro" id="IPR011598">
    <property type="entry name" value="bHLH_dom"/>
</dbReference>
<dbReference type="InterPro" id="IPR036638">
    <property type="entry name" value="HLH_DNA-bd_sf"/>
</dbReference>
<dbReference type="PANTHER" id="PTHR47001:SF1">
    <property type="entry name" value="TRANSCRIPTION FACTOR BHLH11"/>
    <property type="match status" value="1"/>
</dbReference>
<dbReference type="PANTHER" id="PTHR47001">
    <property type="entry name" value="TRANSCRIPTION FACTOR BHLH121"/>
    <property type="match status" value="1"/>
</dbReference>
<dbReference type="Pfam" id="PF23177">
    <property type="entry name" value="bHLH_IRO3"/>
    <property type="match status" value="1"/>
</dbReference>
<dbReference type="SMART" id="SM00353">
    <property type="entry name" value="HLH"/>
    <property type="match status" value="1"/>
</dbReference>
<dbReference type="SUPFAM" id="SSF47459">
    <property type="entry name" value="HLH, helix-loop-helix DNA-binding domain"/>
    <property type="match status" value="1"/>
</dbReference>
<dbReference type="PROSITE" id="PS50888">
    <property type="entry name" value="BHLH"/>
    <property type="match status" value="1"/>
</dbReference>
<evidence type="ECO:0000255" key="1">
    <source>
        <dbReference type="PROSITE-ProRule" id="PRU00981"/>
    </source>
</evidence>
<evidence type="ECO:0000256" key="2">
    <source>
        <dbReference type="SAM" id="MobiDB-lite"/>
    </source>
</evidence>
<evidence type="ECO:0000269" key="3">
    <source>
    </source>
</evidence>
<evidence type="ECO:0000303" key="4">
    <source>
    </source>
</evidence>
<evidence type="ECO:0000305" key="5"/>
<name>BH011_ARATH</name>